<organism>
    <name type="scientific">Danio rerio</name>
    <name type="common">Zebrafish</name>
    <name type="synonym">Brachydanio rerio</name>
    <dbReference type="NCBI Taxonomy" id="7955"/>
    <lineage>
        <taxon>Eukaryota</taxon>
        <taxon>Metazoa</taxon>
        <taxon>Chordata</taxon>
        <taxon>Craniata</taxon>
        <taxon>Vertebrata</taxon>
        <taxon>Euteleostomi</taxon>
        <taxon>Actinopterygii</taxon>
        <taxon>Neopterygii</taxon>
        <taxon>Teleostei</taxon>
        <taxon>Ostariophysi</taxon>
        <taxon>Cypriniformes</taxon>
        <taxon>Danionidae</taxon>
        <taxon>Danioninae</taxon>
        <taxon>Danio</taxon>
    </lineage>
</organism>
<accession>A1L1R5</accession>
<sequence length="713" mass="80295">MAAGVSLVSDLPYSTSRESNTDMETVNVRVPTAKYTKVGETLRHVIPGHMQCSMACGGRACKYENPSRWSDKEQAVKGLYSSWITDHLLAMARPSTEIVEKFNIIEQFHVCGLKTVINLQRPGEHASCGSTLEPESGFTYRPELFMEAGIYFYNFGWKDYGVASLTTILDMVKVMSFAMQEGKIAVHCHAGLGRTGVLIACFLVFTSRMSADQAILFVRAKRPNSIQTRGQLLCVREFAQFLVPLRSVFSCAEPKAHEVTLSQYLTRQRHLLHGYEARHMKNMPKIIHLICRLLLDIAENRQTVEEEVLEIPDLTEEVEKTVSLQALQQLGKEMRGKGIPISSPRSPDQPNLLGTPCDPPHDQPLCSDQEFDVLWRWPTVDNTYRSRLILSKCFSYSDSALHKLDPRVHVLQSPQNLSSKSGLNFSELYASQSRLALETPDLLPSDIKSSPKHDLLTGSRSSLVQSKKIEEQVSCPPASVKQAPLKVAKRSMSYGFLGRTNDSSTMFSICQVGRSTNKNSNCDVTQHFKDVPILTLQSELSPETRHLFVAKALTVDLDGEELRSKVSVWQMELNSREGAWERLCNERDPVVLSLLMWSWLEQLKEPVITKDDVETLSGNRLNPEHALNSLDKGQKQTLLCILDCAAHLLKIPEEVENAFFERLIKAFTWISSDSENGQLIYKALKDVMVPVLRDLRTKAMEELEFTCHCSFVP</sequence>
<comment type="function">
    <text evidence="1">May play roles in cilia formation and/or maintenance.</text>
</comment>
<comment type="similarity">
    <text evidence="3">Belongs to the protein-tyrosine phosphatase family. Non-receptor class PTPDC1 subfamily.</text>
</comment>
<gene>
    <name type="primary">ptpdc1</name>
    <name type="ORF">zgc:158271</name>
</gene>
<keyword id="KW-0970">Cilium biogenesis/degradation</keyword>
<keyword id="KW-0378">Hydrolase</keyword>
<keyword id="KW-0904">Protein phosphatase</keyword>
<keyword id="KW-1185">Reference proteome</keyword>
<dbReference type="EC" id="3.1.3.-"/>
<dbReference type="EMBL" id="BC129183">
    <property type="protein sequence ID" value="AAI29184.1"/>
    <property type="molecule type" value="mRNA"/>
</dbReference>
<dbReference type="EMBL" id="BC131875">
    <property type="protein sequence ID" value="AAI31876.1"/>
    <property type="molecule type" value="mRNA"/>
</dbReference>
<dbReference type="SMR" id="A1L1R5"/>
<dbReference type="FunCoup" id="A1L1R5">
    <property type="interactions" value="1079"/>
</dbReference>
<dbReference type="STRING" id="7955.ENSDARP00000082610"/>
<dbReference type="PaxDb" id="7955-ENSDARP00000082610"/>
<dbReference type="AGR" id="ZFIN:ZDB-GENE-070112-632"/>
<dbReference type="ZFIN" id="ZDB-GENE-070112-632">
    <property type="gene designation" value="ptpdc1a"/>
</dbReference>
<dbReference type="eggNOG" id="KOG1720">
    <property type="taxonomic scope" value="Eukaryota"/>
</dbReference>
<dbReference type="InParanoid" id="A1L1R5"/>
<dbReference type="OrthoDB" id="542013at2759"/>
<dbReference type="PhylomeDB" id="A1L1R5"/>
<dbReference type="PRO" id="PR:A1L1R5"/>
<dbReference type="Proteomes" id="UP000000437">
    <property type="component" value="Unplaced"/>
</dbReference>
<dbReference type="GO" id="GO:0005737">
    <property type="term" value="C:cytoplasm"/>
    <property type="evidence" value="ECO:0000318"/>
    <property type="project" value="GO_Central"/>
</dbReference>
<dbReference type="GO" id="GO:0004725">
    <property type="term" value="F:protein tyrosine phosphatase activity"/>
    <property type="evidence" value="ECO:0000318"/>
    <property type="project" value="GO_Central"/>
</dbReference>
<dbReference type="GO" id="GO:0060271">
    <property type="term" value="P:cilium assembly"/>
    <property type="evidence" value="ECO:0000318"/>
    <property type="project" value="GO_Central"/>
</dbReference>
<dbReference type="CDD" id="cd14506">
    <property type="entry name" value="PTP_PTPDC1"/>
    <property type="match status" value="1"/>
</dbReference>
<dbReference type="FunFam" id="3.90.190.10:FF:000027">
    <property type="entry name" value="Protein tyrosine phosphatase domain containing 1"/>
    <property type="match status" value="1"/>
</dbReference>
<dbReference type="Gene3D" id="3.90.190.10">
    <property type="entry name" value="Protein tyrosine phosphatase superfamily"/>
    <property type="match status" value="1"/>
</dbReference>
<dbReference type="InterPro" id="IPR000340">
    <property type="entry name" value="Dual-sp_phosphatase_cat-dom"/>
</dbReference>
<dbReference type="InterPro" id="IPR029021">
    <property type="entry name" value="Prot-tyrosine_phosphatase-like"/>
</dbReference>
<dbReference type="InterPro" id="IPR050561">
    <property type="entry name" value="PTP"/>
</dbReference>
<dbReference type="InterPro" id="IPR049573">
    <property type="entry name" value="PTPDC1_PTP"/>
</dbReference>
<dbReference type="InterPro" id="IPR016130">
    <property type="entry name" value="Tyr_Pase_AS"/>
</dbReference>
<dbReference type="InterPro" id="IPR003595">
    <property type="entry name" value="Tyr_Pase_cat"/>
</dbReference>
<dbReference type="InterPro" id="IPR000387">
    <property type="entry name" value="Tyr_Pase_dom"/>
</dbReference>
<dbReference type="InterPro" id="IPR020422">
    <property type="entry name" value="TYR_PHOSPHATASE_DUAL_dom"/>
</dbReference>
<dbReference type="PANTHER" id="PTHR23339">
    <property type="entry name" value="TYROSINE SPECIFIC PROTEIN PHOSPHATASE AND DUAL SPECIFICITY PROTEIN PHOSPHATASE"/>
    <property type="match status" value="1"/>
</dbReference>
<dbReference type="Pfam" id="PF00782">
    <property type="entry name" value="DSPc"/>
    <property type="match status" value="1"/>
</dbReference>
<dbReference type="SMART" id="SM00404">
    <property type="entry name" value="PTPc_motif"/>
    <property type="match status" value="1"/>
</dbReference>
<dbReference type="SUPFAM" id="SSF52799">
    <property type="entry name" value="(Phosphotyrosine protein) phosphatases II"/>
    <property type="match status" value="1"/>
</dbReference>
<dbReference type="PROSITE" id="PS00383">
    <property type="entry name" value="TYR_PHOSPHATASE_1"/>
    <property type="match status" value="1"/>
</dbReference>
<dbReference type="PROSITE" id="PS50056">
    <property type="entry name" value="TYR_PHOSPHATASE_2"/>
    <property type="match status" value="1"/>
</dbReference>
<dbReference type="PROSITE" id="PS50054">
    <property type="entry name" value="TYR_PHOSPHATASE_DUAL"/>
    <property type="match status" value="1"/>
</dbReference>
<proteinExistence type="evidence at transcript level"/>
<protein>
    <recommendedName>
        <fullName>Protein tyrosine phosphatase domain-containing protein 1</fullName>
        <ecNumber>3.1.3.-</ecNumber>
    </recommendedName>
</protein>
<reference key="1">
    <citation type="submission" date="2006-12" db="EMBL/GenBank/DDBJ databases">
        <authorList>
            <consortium name="NIH - Zebrafish Gene Collection (ZGC) project"/>
        </authorList>
    </citation>
    <scope>NUCLEOTIDE SEQUENCE [LARGE SCALE MRNA]</scope>
    <source>
        <tissue>Embryo</tissue>
        <tissue>Kidney</tissue>
    </source>
</reference>
<feature type="chain" id="PRO_0000312214" description="Protein tyrosine phosphatase domain-containing protein 1">
    <location>
        <begin position="1"/>
        <end position="713"/>
    </location>
</feature>
<feature type="domain" description="Tyrosine-protein phosphatase" evidence="2">
    <location>
        <begin position="80"/>
        <end position="251"/>
    </location>
</feature>
<feature type="active site" description="Phosphocysteine intermediate" evidence="2">
    <location>
        <position position="188"/>
    </location>
</feature>
<name>PTPC1_DANRE</name>
<evidence type="ECO:0000250" key="1"/>
<evidence type="ECO:0000255" key="2">
    <source>
        <dbReference type="PROSITE-ProRule" id="PRU00160"/>
    </source>
</evidence>
<evidence type="ECO:0000305" key="3"/>